<feature type="initiator methionine" description="Removed" evidence="3">
    <location>
        <position position="1"/>
    </location>
</feature>
<feature type="chain" id="PRO_0000074407" description="Insulin-degrading enzyme">
    <location>
        <begin position="2"/>
        <end position="990"/>
    </location>
</feature>
<feature type="active site" description="Proton acceptor" evidence="2">
    <location>
        <position position="84"/>
    </location>
</feature>
<feature type="binding site" evidence="2">
    <location>
        <position position="81"/>
    </location>
    <ligand>
        <name>Zn(2+)</name>
        <dbReference type="ChEBI" id="CHEBI:29105"/>
    </ligand>
</feature>
<feature type="binding site" evidence="2">
    <location>
        <position position="85"/>
    </location>
    <ligand>
        <name>Zn(2+)</name>
        <dbReference type="ChEBI" id="CHEBI:29105"/>
    </ligand>
</feature>
<feature type="binding site" evidence="2">
    <location>
        <position position="162"/>
    </location>
    <ligand>
        <name>Zn(2+)</name>
        <dbReference type="ChEBI" id="CHEBI:29105"/>
    </ligand>
</feature>
<feature type="sequence conflict" description="In Ref. 1; AAA28439." evidence="4" ref="1">
    <original>A</original>
    <variation>V</variation>
    <location>
        <position position="11"/>
    </location>
</feature>
<feature type="sequence conflict" description="In Ref. 4; AAO74689." evidence="4" ref="4">
    <original>N</original>
    <variation>D</variation>
    <location>
        <position position="178"/>
    </location>
</feature>
<feature type="sequence conflict" description="In Ref. 1; AAA28439." evidence="4" ref="1">
    <original>F</original>
    <variation>L</variation>
    <location>
        <position position="384"/>
    </location>
</feature>
<feature type="sequence conflict" description="In Ref. 1; AAA28439." evidence="4" ref="1">
    <original>QP</original>
    <variation>ES</variation>
    <location>
        <begin position="402"/>
        <end position="403"/>
    </location>
</feature>
<feature type="sequence conflict" description="In Ref. 1; AAA28439." evidence="4" ref="1">
    <original>Q</original>
    <variation>K</variation>
    <location>
        <position position="415"/>
    </location>
</feature>
<feature type="sequence conflict" description="In Ref. 1; AAA28439." evidence="4" ref="1">
    <original>R</original>
    <variation>S</variation>
    <location>
        <position position="433"/>
    </location>
</feature>
<reference key="1">
    <citation type="journal article" date="1990" name="Mol. Endocrinol.">
        <title>Cloning and expression of the cDNA for a Drosophila insulin-degrading enzyme.</title>
        <authorList>
            <person name="Kuo W.L."/>
            <person name="Gehm B.D."/>
            <person name="Rosner M.R."/>
        </authorList>
    </citation>
    <scope>NUCLEOTIDE SEQUENCE [MRNA]</scope>
    <scope>PARTIAL PROTEIN SEQUENCE</scope>
</reference>
<reference key="2">
    <citation type="journal article" date="2000" name="Science">
        <title>The genome sequence of Drosophila melanogaster.</title>
        <authorList>
            <person name="Adams M.D."/>
            <person name="Celniker S.E."/>
            <person name="Holt R.A."/>
            <person name="Evans C.A."/>
            <person name="Gocayne J.D."/>
            <person name="Amanatides P.G."/>
            <person name="Scherer S.E."/>
            <person name="Li P.W."/>
            <person name="Hoskins R.A."/>
            <person name="Galle R.F."/>
            <person name="George R.A."/>
            <person name="Lewis S.E."/>
            <person name="Richards S."/>
            <person name="Ashburner M."/>
            <person name="Henderson S.N."/>
            <person name="Sutton G.G."/>
            <person name="Wortman J.R."/>
            <person name="Yandell M.D."/>
            <person name="Zhang Q."/>
            <person name="Chen L.X."/>
            <person name="Brandon R.C."/>
            <person name="Rogers Y.-H.C."/>
            <person name="Blazej R.G."/>
            <person name="Champe M."/>
            <person name="Pfeiffer B.D."/>
            <person name="Wan K.H."/>
            <person name="Doyle C."/>
            <person name="Baxter E.G."/>
            <person name="Helt G."/>
            <person name="Nelson C.R."/>
            <person name="Miklos G.L.G."/>
            <person name="Abril J.F."/>
            <person name="Agbayani A."/>
            <person name="An H.-J."/>
            <person name="Andrews-Pfannkoch C."/>
            <person name="Baldwin D."/>
            <person name="Ballew R.M."/>
            <person name="Basu A."/>
            <person name="Baxendale J."/>
            <person name="Bayraktaroglu L."/>
            <person name="Beasley E.M."/>
            <person name="Beeson K.Y."/>
            <person name="Benos P.V."/>
            <person name="Berman B.P."/>
            <person name="Bhandari D."/>
            <person name="Bolshakov S."/>
            <person name="Borkova D."/>
            <person name="Botchan M.R."/>
            <person name="Bouck J."/>
            <person name="Brokstein P."/>
            <person name="Brottier P."/>
            <person name="Burtis K.C."/>
            <person name="Busam D.A."/>
            <person name="Butler H."/>
            <person name="Cadieu E."/>
            <person name="Center A."/>
            <person name="Chandra I."/>
            <person name="Cherry J.M."/>
            <person name="Cawley S."/>
            <person name="Dahlke C."/>
            <person name="Davenport L.B."/>
            <person name="Davies P."/>
            <person name="de Pablos B."/>
            <person name="Delcher A."/>
            <person name="Deng Z."/>
            <person name="Mays A.D."/>
            <person name="Dew I."/>
            <person name="Dietz S.M."/>
            <person name="Dodson K."/>
            <person name="Doup L.E."/>
            <person name="Downes M."/>
            <person name="Dugan-Rocha S."/>
            <person name="Dunkov B.C."/>
            <person name="Dunn P."/>
            <person name="Durbin K.J."/>
            <person name="Evangelista C.C."/>
            <person name="Ferraz C."/>
            <person name="Ferriera S."/>
            <person name="Fleischmann W."/>
            <person name="Fosler C."/>
            <person name="Gabrielian A.E."/>
            <person name="Garg N.S."/>
            <person name="Gelbart W.M."/>
            <person name="Glasser K."/>
            <person name="Glodek A."/>
            <person name="Gong F."/>
            <person name="Gorrell J.H."/>
            <person name="Gu Z."/>
            <person name="Guan P."/>
            <person name="Harris M."/>
            <person name="Harris N.L."/>
            <person name="Harvey D.A."/>
            <person name="Heiman T.J."/>
            <person name="Hernandez J.R."/>
            <person name="Houck J."/>
            <person name="Hostin D."/>
            <person name="Houston K.A."/>
            <person name="Howland T.J."/>
            <person name="Wei M.-H."/>
            <person name="Ibegwam C."/>
            <person name="Jalali M."/>
            <person name="Kalush F."/>
            <person name="Karpen G.H."/>
            <person name="Ke Z."/>
            <person name="Kennison J.A."/>
            <person name="Ketchum K.A."/>
            <person name="Kimmel B.E."/>
            <person name="Kodira C.D."/>
            <person name="Kraft C.L."/>
            <person name="Kravitz S."/>
            <person name="Kulp D."/>
            <person name="Lai Z."/>
            <person name="Lasko P."/>
            <person name="Lei Y."/>
            <person name="Levitsky A.A."/>
            <person name="Li J.H."/>
            <person name="Li Z."/>
            <person name="Liang Y."/>
            <person name="Lin X."/>
            <person name="Liu X."/>
            <person name="Mattei B."/>
            <person name="McIntosh T.C."/>
            <person name="McLeod M.P."/>
            <person name="McPherson D."/>
            <person name="Merkulov G."/>
            <person name="Milshina N.V."/>
            <person name="Mobarry C."/>
            <person name="Morris J."/>
            <person name="Moshrefi A."/>
            <person name="Mount S.M."/>
            <person name="Moy M."/>
            <person name="Murphy B."/>
            <person name="Murphy L."/>
            <person name="Muzny D.M."/>
            <person name="Nelson D.L."/>
            <person name="Nelson D.R."/>
            <person name="Nelson K.A."/>
            <person name="Nixon K."/>
            <person name="Nusskern D.R."/>
            <person name="Pacleb J.M."/>
            <person name="Palazzolo M."/>
            <person name="Pittman G.S."/>
            <person name="Pan S."/>
            <person name="Pollard J."/>
            <person name="Puri V."/>
            <person name="Reese M.G."/>
            <person name="Reinert K."/>
            <person name="Remington K."/>
            <person name="Saunders R.D.C."/>
            <person name="Scheeler F."/>
            <person name="Shen H."/>
            <person name="Shue B.C."/>
            <person name="Siden-Kiamos I."/>
            <person name="Simpson M."/>
            <person name="Skupski M.P."/>
            <person name="Smith T.J."/>
            <person name="Spier E."/>
            <person name="Spradling A.C."/>
            <person name="Stapleton M."/>
            <person name="Strong R."/>
            <person name="Sun E."/>
            <person name="Svirskas R."/>
            <person name="Tector C."/>
            <person name="Turner R."/>
            <person name="Venter E."/>
            <person name="Wang A.H."/>
            <person name="Wang X."/>
            <person name="Wang Z.-Y."/>
            <person name="Wassarman D.A."/>
            <person name="Weinstock G.M."/>
            <person name="Weissenbach J."/>
            <person name="Williams S.M."/>
            <person name="Woodage T."/>
            <person name="Worley K.C."/>
            <person name="Wu D."/>
            <person name="Yang S."/>
            <person name="Yao Q.A."/>
            <person name="Ye J."/>
            <person name="Yeh R.-F."/>
            <person name="Zaveri J.S."/>
            <person name="Zhan M."/>
            <person name="Zhang G."/>
            <person name="Zhao Q."/>
            <person name="Zheng L."/>
            <person name="Zheng X.H."/>
            <person name="Zhong F.N."/>
            <person name="Zhong W."/>
            <person name="Zhou X."/>
            <person name="Zhu S.C."/>
            <person name="Zhu X."/>
            <person name="Smith H.O."/>
            <person name="Gibbs R.A."/>
            <person name="Myers E.W."/>
            <person name="Rubin G.M."/>
            <person name="Venter J.C."/>
        </authorList>
    </citation>
    <scope>NUCLEOTIDE SEQUENCE [LARGE SCALE GENOMIC DNA]</scope>
    <source>
        <strain>Berkeley</strain>
    </source>
</reference>
<reference key="3">
    <citation type="journal article" date="2002" name="Genome Biol.">
        <title>Annotation of the Drosophila melanogaster euchromatic genome: a systematic review.</title>
        <authorList>
            <person name="Misra S."/>
            <person name="Crosby M.A."/>
            <person name="Mungall C.J."/>
            <person name="Matthews B.B."/>
            <person name="Campbell K.S."/>
            <person name="Hradecky P."/>
            <person name="Huang Y."/>
            <person name="Kaminker J.S."/>
            <person name="Millburn G.H."/>
            <person name="Prochnik S.E."/>
            <person name="Smith C.D."/>
            <person name="Tupy J.L."/>
            <person name="Whitfield E.J."/>
            <person name="Bayraktaroglu L."/>
            <person name="Berman B.P."/>
            <person name="Bettencourt B.R."/>
            <person name="Celniker S.E."/>
            <person name="de Grey A.D.N.J."/>
            <person name="Drysdale R.A."/>
            <person name="Harris N.L."/>
            <person name="Richter J."/>
            <person name="Russo S."/>
            <person name="Schroeder A.J."/>
            <person name="Shu S.Q."/>
            <person name="Stapleton M."/>
            <person name="Yamada C."/>
            <person name="Ashburner M."/>
            <person name="Gelbart W.M."/>
            <person name="Rubin G.M."/>
            <person name="Lewis S.E."/>
        </authorList>
    </citation>
    <scope>GENOME REANNOTATION</scope>
    <source>
        <strain>Berkeley</strain>
    </source>
</reference>
<reference key="4">
    <citation type="submission" date="2009-01" db="EMBL/GenBank/DDBJ databases">
        <authorList>
            <person name="Stapleton M."/>
            <person name="Brokstein P."/>
            <person name="Hong L."/>
            <person name="Agbayani A."/>
            <person name="Carlson J.W."/>
            <person name="Booth B."/>
            <person name="Champe M."/>
            <person name="Chavez C."/>
            <person name="Dorsett V."/>
            <person name="Dresnek D."/>
            <person name="Farfan D."/>
            <person name="Frise E."/>
            <person name="George R.A."/>
            <person name="Gonzalez M."/>
            <person name="Guarin H."/>
            <person name="Kronmiller B."/>
            <person name="Li P.W."/>
            <person name="Liao G."/>
            <person name="Miranda A."/>
            <person name="Mungall C.J."/>
            <person name="Nunoo J."/>
            <person name="Pacleb J.M."/>
            <person name="Paragas V."/>
            <person name="Park S."/>
            <person name="Patel S."/>
            <person name="Phouanenavong S."/>
            <person name="Wan K.H."/>
            <person name="Yu C."/>
            <person name="Lewis S.E."/>
            <person name="Rubin G.M."/>
            <person name="Celniker S.E."/>
        </authorList>
    </citation>
    <scope>NUCLEOTIDE SEQUENCE [LARGE SCALE MRNA]</scope>
    <source>
        <strain>Berkeley</strain>
        <tissue>Head</tissue>
    </source>
</reference>
<reference key="5">
    <citation type="journal article" date="2002" name="Genome Biol.">
        <title>A Drosophila full-length cDNA resource.</title>
        <authorList>
            <person name="Stapleton M."/>
            <person name="Carlson J.W."/>
            <person name="Brokstein P."/>
            <person name="Yu C."/>
            <person name="Champe M."/>
            <person name="George R.A."/>
            <person name="Guarin H."/>
            <person name="Kronmiller B."/>
            <person name="Pacleb J.M."/>
            <person name="Park S."/>
            <person name="Wan K.H."/>
            <person name="Rubin G.M."/>
            <person name="Celniker S.E."/>
        </authorList>
    </citation>
    <scope>NUCLEOTIDE SEQUENCE [LARGE SCALE MRNA] OF 663-990</scope>
    <source>
        <strain>Berkeley</strain>
        <tissue>Embryo</tissue>
    </source>
</reference>
<reference key="6">
    <citation type="journal article" date="1988" name="Biochemistry">
        <title>Isolation and characterization of an insulin-degrading enzyme from Drosophila melanogaster.</title>
        <authorList>
            <person name="Garcia J.V."/>
            <person name="Fenton B.W."/>
            <person name="Rosner M.R."/>
        </authorList>
    </citation>
    <scope>PROTEIN SEQUENCE OF 2-16</scope>
    <scope>FUNCTION</scope>
    <scope>INDUCTION</scope>
    <scope>BIOPHYSICOCHEMICAL PROPERTIES</scope>
</reference>
<protein>
    <recommendedName>
        <fullName>Insulin-degrading enzyme</fullName>
        <ecNumber>3.4.24.56</ecNumber>
    </recommendedName>
    <alternativeName>
        <fullName>Insulin protease</fullName>
        <shortName>Insulinase</shortName>
    </alternativeName>
    <alternativeName>
        <fullName>Insulysin</fullName>
    </alternativeName>
</protein>
<name>IDE_DROME</name>
<accession>P22817</accession>
<accession>B9EQR9</accession>
<accession>Q86MR2</accession>
<accession>Q95S06</accession>
<accession>Q9VPG8</accession>
<organism>
    <name type="scientific">Drosophila melanogaster</name>
    <name type="common">Fruit fly</name>
    <dbReference type="NCBI Taxonomy" id="7227"/>
    <lineage>
        <taxon>Eukaryota</taxon>
        <taxon>Metazoa</taxon>
        <taxon>Ecdysozoa</taxon>
        <taxon>Arthropoda</taxon>
        <taxon>Hexapoda</taxon>
        <taxon>Insecta</taxon>
        <taxon>Pterygota</taxon>
        <taxon>Neoptera</taxon>
        <taxon>Endopterygota</taxon>
        <taxon>Diptera</taxon>
        <taxon>Brachycera</taxon>
        <taxon>Muscomorpha</taxon>
        <taxon>Ephydroidea</taxon>
        <taxon>Drosophilidae</taxon>
        <taxon>Drosophila</taxon>
        <taxon>Sophophora</taxon>
    </lineage>
</organism>
<keyword id="KW-0903">Direct protein sequencing</keyword>
<keyword id="KW-0378">Hydrolase</keyword>
<keyword id="KW-0479">Metal-binding</keyword>
<keyword id="KW-0482">Metalloprotease</keyword>
<keyword id="KW-0645">Protease</keyword>
<keyword id="KW-1185">Reference proteome</keyword>
<keyword id="KW-0862">Zinc</keyword>
<proteinExistence type="evidence at protein level"/>
<gene>
    <name type="primary">Ide</name>
    <name type="ORF">CG5517</name>
</gene>
<comment type="function">
    <text evidence="3">Can cleave insulin and TGF-alpha.</text>
</comment>
<comment type="catalytic activity">
    <reaction>
        <text>Degradation of insulin, glucagon and other polypeptides. No action on proteins.</text>
        <dbReference type="EC" id="3.4.24.56"/>
    </reaction>
</comment>
<comment type="cofactor">
    <cofactor evidence="1">
        <name>Zn(2+)</name>
        <dbReference type="ChEBI" id="CHEBI:29105"/>
    </cofactor>
    <text evidence="1">Binds 1 zinc ion per subunit.</text>
</comment>
<comment type="biophysicochemical properties">
    <phDependence>
        <text evidence="3">Optimum pH is 7-8.</text>
    </phDependence>
    <temperatureDependence>
        <text evidence="3">Optimum temperature is 37 degrees Celsius.</text>
    </temperatureDependence>
</comment>
<comment type="induction">
    <text evidence="3">Inhibited by bacitracin and sulfhydryl-specific reagents.</text>
</comment>
<comment type="similarity">
    <text evidence="4">Belongs to the peptidase M16 family.</text>
</comment>
<comment type="sequence caution" evidence="4">
    <conflict type="erroneous initiation">
        <sequence resource="EMBL-CDS" id="AAL28563"/>
    </conflict>
</comment>
<comment type="sequence caution" evidence="4">
    <conflict type="erroneous initiation">
        <sequence resource="EMBL-CDS" id="AAO74689"/>
    </conflict>
</comment>
<comment type="sequence caution" evidence="4">
    <conflict type="erroneous initiation">
        <sequence resource="EMBL-CDS" id="ACM16704"/>
    </conflict>
</comment>
<dbReference type="EC" id="3.4.24.56"/>
<dbReference type="EMBL" id="M58465">
    <property type="protein sequence ID" value="AAA28439.1"/>
    <property type="molecule type" value="mRNA"/>
</dbReference>
<dbReference type="EMBL" id="AE014296">
    <property type="protein sequence ID" value="AAF51584.3"/>
    <property type="molecule type" value="Genomic_DNA"/>
</dbReference>
<dbReference type="EMBL" id="BT006006">
    <property type="protein sequence ID" value="AAO74689.1"/>
    <property type="status" value="ALT_INIT"/>
    <property type="molecule type" value="mRNA"/>
</dbReference>
<dbReference type="EMBL" id="BT057994">
    <property type="protein sequence ID" value="ACM16704.1"/>
    <property type="status" value="ALT_INIT"/>
    <property type="molecule type" value="mRNA"/>
</dbReference>
<dbReference type="EMBL" id="AY061015">
    <property type="protein sequence ID" value="AAL28563.1"/>
    <property type="status" value="ALT_INIT"/>
    <property type="molecule type" value="mRNA"/>
</dbReference>
<dbReference type="PIR" id="A37254">
    <property type="entry name" value="SNFFIN"/>
</dbReference>
<dbReference type="RefSeq" id="NP_524182.3">
    <property type="nucleotide sequence ID" value="NM_079458.4"/>
</dbReference>
<dbReference type="SMR" id="P22817"/>
<dbReference type="BioGRID" id="65508">
    <property type="interactions" value="8"/>
</dbReference>
<dbReference type="FunCoup" id="P22817">
    <property type="interactions" value="1787"/>
</dbReference>
<dbReference type="IntAct" id="P22817">
    <property type="interactions" value="1"/>
</dbReference>
<dbReference type="STRING" id="7227.FBpp0271781"/>
<dbReference type="MEROPS" id="M16.A08"/>
<dbReference type="PaxDb" id="7227-FBpp0271781"/>
<dbReference type="DNASU" id="40248"/>
<dbReference type="EnsemblMetazoa" id="FBtr0273273">
    <property type="protein sequence ID" value="FBpp0271781"/>
    <property type="gene ID" value="FBgn0001247"/>
</dbReference>
<dbReference type="GeneID" id="40248"/>
<dbReference type="KEGG" id="dme:Dmel_CG5517"/>
<dbReference type="AGR" id="FB:FBgn0001247"/>
<dbReference type="CTD" id="3416"/>
<dbReference type="FlyBase" id="FBgn0001247">
    <property type="gene designation" value="Ide"/>
</dbReference>
<dbReference type="VEuPathDB" id="VectorBase:FBgn0001247"/>
<dbReference type="eggNOG" id="KOG0959">
    <property type="taxonomic scope" value="Eukaryota"/>
</dbReference>
<dbReference type="GeneTree" id="ENSGT00940000155780"/>
<dbReference type="HOGENOM" id="CLU_004639_1_1_1"/>
<dbReference type="InParanoid" id="P22817"/>
<dbReference type="OMA" id="WIFDEMK"/>
<dbReference type="OrthoDB" id="952271at2759"/>
<dbReference type="PhylomeDB" id="P22817"/>
<dbReference type="BRENDA" id="3.4.24.56">
    <property type="organism ID" value="1994"/>
</dbReference>
<dbReference type="Reactome" id="R-DME-5689880">
    <property type="pathway name" value="Ub-specific processing proteases"/>
</dbReference>
<dbReference type="Reactome" id="R-DME-9033241">
    <property type="pathway name" value="Peroxisomal protein import"/>
</dbReference>
<dbReference type="BioGRID-ORCS" id="40248">
    <property type="hits" value="0 hits in 3 CRISPR screens"/>
</dbReference>
<dbReference type="ChiTaRS" id="Ide">
    <property type="organism name" value="fly"/>
</dbReference>
<dbReference type="GenomeRNAi" id="40248"/>
<dbReference type="PRO" id="PR:P22817"/>
<dbReference type="Proteomes" id="UP000000803">
    <property type="component" value="Chromosome 3L"/>
</dbReference>
<dbReference type="Bgee" id="FBgn0001247">
    <property type="expression patterns" value="Expressed in eye disc (Drosophila) and 142 other cell types or tissues"/>
</dbReference>
<dbReference type="GO" id="GO:0005737">
    <property type="term" value="C:cytoplasm"/>
    <property type="evidence" value="ECO:0000314"/>
    <property type="project" value="FlyBase"/>
</dbReference>
<dbReference type="GO" id="GO:0005829">
    <property type="term" value="C:cytosol"/>
    <property type="evidence" value="ECO:0000318"/>
    <property type="project" value="GO_Central"/>
</dbReference>
<dbReference type="GO" id="GO:0005739">
    <property type="term" value="C:mitochondrion"/>
    <property type="evidence" value="ECO:0000318"/>
    <property type="project" value="GO_Central"/>
</dbReference>
<dbReference type="GO" id="GO:0005777">
    <property type="term" value="C:peroxisome"/>
    <property type="evidence" value="ECO:0000250"/>
    <property type="project" value="FlyBase"/>
</dbReference>
<dbReference type="GO" id="GO:0005886">
    <property type="term" value="C:plasma membrane"/>
    <property type="evidence" value="ECO:0000314"/>
    <property type="project" value="FlyBase"/>
</dbReference>
<dbReference type="GO" id="GO:0046872">
    <property type="term" value="F:metal ion binding"/>
    <property type="evidence" value="ECO:0007669"/>
    <property type="project" value="UniProtKB-KW"/>
</dbReference>
<dbReference type="GO" id="GO:0004222">
    <property type="term" value="F:metalloendopeptidase activity"/>
    <property type="evidence" value="ECO:0000318"/>
    <property type="project" value="GO_Central"/>
</dbReference>
<dbReference type="GO" id="GO:0008237">
    <property type="term" value="F:metallopeptidase activity"/>
    <property type="evidence" value="ECO:0000314"/>
    <property type="project" value="FlyBase"/>
</dbReference>
<dbReference type="GO" id="GO:0050829">
    <property type="term" value="P:defense response to Gram-negative bacterium"/>
    <property type="evidence" value="ECO:0007001"/>
    <property type="project" value="FlyBase"/>
</dbReference>
<dbReference type="GO" id="GO:0008340">
    <property type="term" value="P:determination of adult lifespan"/>
    <property type="evidence" value="ECO:0000315"/>
    <property type="project" value="FlyBase"/>
</dbReference>
<dbReference type="GO" id="GO:1901143">
    <property type="term" value="P:insulin catabolic process"/>
    <property type="evidence" value="ECO:0000314"/>
    <property type="project" value="FlyBase"/>
</dbReference>
<dbReference type="GO" id="GO:0048640">
    <property type="term" value="P:negative regulation of developmental growth"/>
    <property type="evidence" value="ECO:0000315"/>
    <property type="project" value="FlyBase"/>
</dbReference>
<dbReference type="GO" id="GO:0045926">
    <property type="term" value="P:negative regulation of growth"/>
    <property type="evidence" value="ECO:0000315"/>
    <property type="project" value="FlyBase"/>
</dbReference>
<dbReference type="GO" id="GO:0046627">
    <property type="term" value="P:negative regulation of insulin receptor signaling pathway"/>
    <property type="evidence" value="ECO:0000316"/>
    <property type="project" value="FlyBase"/>
</dbReference>
<dbReference type="GO" id="GO:0043171">
    <property type="term" value="P:peptide catabolic process"/>
    <property type="evidence" value="ECO:0000318"/>
    <property type="project" value="GO_Central"/>
</dbReference>
<dbReference type="GO" id="GO:0045089">
    <property type="term" value="P:positive regulation of innate immune response"/>
    <property type="evidence" value="ECO:0007001"/>
    <property type="project" value="FlyBase"/>
</dbReference>
<dbReference type="GO" id="GO:0006508">
    <property type="term" value="P:proteolysis"/>
    <property type="evidence" value="ECO:0000314"/>
    <property type="project" value="FlyBase"/>
</dbReference>
<dbReference type="GO" id="GO:0051603">
    <property type="term" value="P:proteolysis involved in protein catabolic process"/>
    <property type="evidence" value="ECO:0000318"/>
    <property type="project" value="GO_Central"/>
</dbReference>
<dbReference type="GO" id="GO:0046662">
    <property type="term" value="P:regulation of egg-laying behavior"/>
    <property type="evidence" value="ECO:0000315"/>
    <property type="project" value="FlyBase"/>
</dbReference>
<dbReference type="FunFam" id="3.30.830.10:FF:000003">
    <property type="entry name" value="Insulin-degrading enzyme"/>
    <property type="match status" value="1"/>
</dbReference>
<dbReference type="FunFam" id="3.30.830.10:FF:000030">
    <property type="entry name" value="Insulin-degrading enzyme"/>
    <property type="match status" value="1"/>
</dbReference>
<dbReference type="FunFam" id="3.30.830.10:FF:000005">
    <property type="entry name" value="nardilysin isoform X1"/>
    <property type="match status" value="1"/>
</dbReference>
<dbReference type="FunFam" id="3.30.830.10:FF:000004">
    <property type="entry name" value="Putative insulin-degrading enzyme"/>
    <property type="match status" value="1"/>
</dbReference>
<dbReference type="Gene3D" id="3.30.830.10">
    <property type="entry name" value="Metalloenzyme, LuxS/M16 peptidase-like"/>
    <property type="match status" value="4"/>
</dbReference>
<dbReference type="InterPro" id="IPR011249">
    <property type="entry name" value="Metalloenz_LuxS/M16"/>
</dbReference>
<dbReference type="InterPro" id="IPR011765">
    <property type="entry name" value="Pept_M16_N"/>
</dbReference>
<dbReference type="InterPro" id="IPR001431">
    <property type="entry name" value="Pept_M16_Zn_BS"/>
</dbReference>
<dbReference type="InterPro" id="IPR050626">
    <property type="entry name" value="Peptidase_M16"/>
</dbReference>
<dbReference type="InterPro" id="IPR007863">
    <property type="entry name" value="Peptidase_M16_C"/>
</dbReference>
<dbReference type="InterPro" id="IPR032632">
    <property type="entry name" value="Peptidase_M16_M"/>
</dbReference>
<dbReference type="PANTHER" id="PTHR43690:SF18">
    <property type="entry name" value="INSULIN-DEGRADING ENZYME-RELATED"/>
    <property type="match status" value="1"/>
</dbReference>
<dbReference type="PANTHER" id="PTHR43690">
    <property type="entry name" value="NARDILYSIN"/>
    <property type="match status" value="1"/>
</dbReference>
<dbReference type="Pfam" id="PF00675">
    <property type="entry name" value="Peptidase_M16"/>
    <property type="match status" value="1"/>
</dbReference>
<dbReference type="Pfam" id="PF05193">
    <property type="entry name" value="Peptidase_M16_C"/>
    <property type="match status" value="2"/>
</dbReference>
<dbReference type="Pfam" id="PF16187">
    <property type="entry name" value="Peptidase_M16_M"/>
    <property type="match status" value="1"/>
</dbReference>
<dbReference type="SUPFAM" id="SSF63411">
    <property type="entry name" value="LuxS/MPP-like metallohydrolase"/>
    <property type="match status" value="4"/>
</dbReference>
<dbReference type="PROSITE" id="PS00143">
    <property type="entry name" value="INSULINASE"/>
    <property type="match status" value="1"/>
</dbReference>
<evidence type="ECO:0000250" key="1"/>
<evidence type="ECO:0000255" key="2">
    <source>
        <dbReference type="PROSITE-ProRule" id="PRU10096"/>
    </source>
</evidence>
<evidence type="ECO:0000269" key="3">
    <source>
    </source>
</evidence>
<evidence type="ECO:0000305" key="4"/>
<sequence>MTIAESSQKSATRKPDSMEPILRLNNIEKSLQDTRDYRGLQLENGLKVLLISDPNTDVSAAALSVQVGHMSDPTNLPGLAHFCEHMLFLGTEKYPHENGYTTYLSQSGGSSNAATYPLMTKYHFHVAPDKLDGALDRFAQFFIAPLFTPSATEREINAVNSEHEKNLPSDLWRIKQVNRHLAKPDHAYSKFGSGNKTTLSEIPKSKNIDVRDELLKFHKQWYSANIMCLAVIGKESLDELEGMVLEKFSEIENKNVKVPGWPRHPYAEERYGQKVKIVPIKDIRSLTISFTTDDLTQFYKSGPDNYLTHLIGHEGKGSILSELRRLGWCNDLMAGHQNTQNGFGFFDIVVDLTQEGLEHVDDIVKIVFQYLEMLRKEGPKKWIFDECVKLNEMRFRFKEKEQPENLVTHAVSSMQIFPLEEVLIAPYLSNEWRPDLIKGLLDELVPSKSRIVIVSQSFEPDCDLAEPYYKTKYGITRVAKDTVQSWENCELNENLKLALPNSFIPTNFDISDVPADAPKHPTIILDTPILRVWHKQDNQFNKPKACMTFDMSNPIAYLDPLNCNLNHMMVMLLKDQLNEYLYDAELASLKLSVMGKSCGIDFTIRGFSDKQVVLLEKLLDHLFDFSIDEKRFDILKEEYVRSLKNFKAEQPYQHSIYYLALLLTENAWANMELLDAMELVTYDRVLNFAKEFFQRLHTECFIFGNVTKQQATDIAGRVNTRLEATNASKLPILARQMLKKREYKLLAGDSYLFEKENEFHKSSCAQLYLQCGAQTDHTNIMVNLVSQVLSEPCYDCLRTKEQLGYIVFSGVRKVNGANGIRIIVQSAKHPSYVEDRIENFLQTYLQVIEDMPLDEFERHKEALAVKKLEKPKTIFQQFSQFYGEIAMQTYHFEREEAEVAILRKISKADFVDYFKKFIAKDGEERRVLSVHIVSQQTDENATSEAEPVEITNMERHKPISDIVTFKSCKELYPIALPFLDIKAKGARSKL</sequence>